<protein>
    <recommendedName>
        <fullName evidence="3">Conotoxin Reg12f</fullName>
    </recommendedName>
</protein>
<organism>
    <name type="scientific">Conus regius</name>
    <name type="common">Crown cone</name>
    <dbReference type="NCBI Taxonomy" id="101314"/>
    <lineage>
        <taxon>Eukaryota</taxon>
        <taxon>Metazoa</taxon>
        <taxon>Spiralia</taxon>
        <taxon>Lophotrochozoa</taxon>
        <taxon>Mollusca</taxon>
        <taxon>Gastropoda</taxon>
        <taxon>Caenogastropoda</taxon>
        <taxon>Neogastropoda</taxon>
        <taxon>Conoidea</taxon>
        <taxon>Conidae</taxon>
        <taxon>Conus</taxon>
        <taxon>Stephanoconus</taxon>
    </lineage>
</organism>
<reference key="1">
    <citation type="journal article" date="2006" name="Prog. Mol. Subcell. Biol.">
        <title>Hyperhydroxylation: a new strategy for neuronal targeting by venomous marine molluscs.</title>
        <authorList>
            <person name="Franco A."/>
            <person name="Pisarewicz K."/>
            <person name="Moller C."/>
            <person name="Mora D."/>
            <person name="Fields G.B."/>
            <person name="Mari F."/>
        </authorList>
    </citation>
    <scope>PROTEIN SEQUENCE</scope>
    <scope>SUBCELLULAR LOCATION</scope>
    <scope>HYDROXYLATION AT PRO-5; PRO-15 AND PRO-18</scope>
    <source>
        <tissue>Venom</tissue>
    </source>
</reference>
<dbReference type="ConoServer" id="1492">
    <property type="toxin name" value="Reg12f"/>
</dbReference>
<dbReference type="GO" id="GO:0005576">
    <property type="term" value="C:extracellular region"/>
    <property type="evidence" value="ECO:0007669"/>
    <property type="project" value="UniProtKB-SubCell"/>
</dbReference>
<dbReference type="GO" id="GO:0090729">
    <property type="term" value="F:toxin activity"/>
    <property type="evidence" value="ECO:0007669"/>
    <property type="project" value="UniProtKB-KW"/>
</dbReference>
<evidence type="ECO:0000250" key="1">
    <source>
        <dbReference type="UniProtKB" id="Q5EHP3"/>
    </source>
</evidence>
<evidence type="ECO:0000269" key="2">
    <source>
    </source>
</evidence>
<evidence type="ECO:0000303" key="3">
    <source>
    </source>
</evidence>
<evidence type="ECO:0000305" key="4"/>
<evidence type="ECO:0000305" key="5">
    <source>
    </source>
</evidence>
<accession>P85018</accession>
<comment type="subcellular location">
    <subcellularLocation>
        <location evidence="2">Secreted</location>
    </subcellularLocation>
</comment>
<comment type="tissue specificity">
    <text evidence="5">Expressed by the venom duct.</text>
</comment>
<comment type="domain">
    <text evidence="4">The cysteine framework is III (CC-C-C-CC). Classified in the M-1 branch, since 1 residue stands between the fourth and the fifth cysteine residues.</text>
</comment>
<comment type="similarity">
    <text evidence="4">Belongs to the conotoxin M superfamily.</text>
</comment>
<feature type="peptide" id="PRO_0000259392" description="Conotoxin Reg12f" evidence="2">
    <location>
        <begin position="1"/>
        <end position="19"/>
    </location>
</feature>
<feature type="modified residue" description="4-hydroxyproline" evidence="2">
    <location>
        <position position="5"/>
    </location>
</feature>
<feature type="modified residue" description="4-hydroxyproline" evidence="2">
    <location>
        <position position="15"/>
    </location>
</feature>
<feature type="modified residue" description="4-hydroxyproline" evidence="2">
    <location>
        <position position="18"/>
    </location>
</feature>
<feature type="disulfide bond" evidence="1">
    <location>
        <begin position="2"/>
        <end position="16"/>
    </location>
</feature>
<feature type="disulfide bond" evidence="1">
    <location>
        <begin position="3"/>
        <end position="14"/>
    </location>
</feature>
<feature type="disulfide bond" evidence="1">
    <location>
        <begin position="8"/>
        <end position="17"/>
    </location>
</feature>
<name>CM3CF_CONRE</name>
<sequence length="19" mass="2068">GCCSPWNCIQLRACPCCPN</sequence>
<keyword id="KW-0903">Direct protein sequencing</keyword>
<keyword id="KW-1015">Disulfide bond</keyword>
<keyword id="KW-0379">Hydroxylation</keyword>
<keyword id="KW-0964">Secreted</keyword>
<keyword id="KW-0800">Toxin</keyword>
<proteinExistence type="evidence at protein level"/>